<proteinExistence type="inferred from homology"/>
<keyword id="KW-0963">Cytoplasm</keyword>
<keyword id="KW-0704">Schiff base</keyword>
<keyword id="KW-0784">Thiamine biosynthesis</keyword>
<keyword id="KW-0808">Transferase</keyword>
<sequence>MIMLNIGPFSFHSRLLLGTGKFPDFDVQQKAIDVSEAEVLTFAVRRMDIFDAKQPNLLEKLDVKKYTLLPNTAGAKNAEEAVRIAKLAKASGLCDMIKVEVIGDDRTLLPDPVETLKASEMLLEEGFIVLPYTSDDVVLARKLQELGVHAIMPGASPIGSGLGIVNPLNLSFIIEQATVPVIVDAGIGSPADAAFAMELGADGVLLNTAVSGAKDPIKMAQAMKLSIEAGRLGFEAGRIARKRCATASSPLEGMSVVE</sequence>
<organism>
    <name type="scientific">Bacillus thuringiensis subsp. konkukian (strain 97-27)</name>
    <dbReference type="NCBI Taxonomy" id="281309"/>
    <lineage>
        <taxon>Bacteria</taxon>
        <taxon>Bacillati</taxon>
        <taxon>Bacillota</taxon>
        <taxon>Bacilli</taxon>
        <taxon>Bacillales</taxon>
        <taxon>Bacillaceae</taxon>
        <taxon>Bacillus</taxon>
        <taxon>Bacillus cereus group</taxon>
    </lineage>
</organism>
<feature type="chain" id="PRO_0000162785" description="Thiazole synthase">
    <location>
        <begin position="1"/>
        <end position="258"/>
    </location>
</feature>
<feature type="active site" description="Schiff-base intermediate with DXP" evidence="1">
    <location>
        <position position="98"/>
    </location>
</feature>
<feature type="binding site" evidence="1">
    <location>
        <position position="159"/>
    </location>
    <ligand>
        <name>1-deoxy-D-xylulose 5-phosphate</name>
        <dbReference type="ChEBI" id="CHEBI:57792"/>
    </ligand>
</feature>
<feature type="binding site" evidence="1">
    <location>
        <begin position="185"/>
        <end position="186"/>
    </location>
    <ligand>
        <name>1-deoxy-D-xylulose 5-phosphate</name>
        <dbReference type="ChEBI" id="CHEBI:57792"/>
    </ligand>
</feature>
<feature type="binding site" evidence="1">
    <location>
        <begin position="207"/>
        <end position="208"/>
    </location>
    <ligand>
        <name>1-deoxy-D-xylulose 5-phosphate</name>
        <dbReference type="ChEBI" id="CHEBI:57792"/>
    </ligand>
</feature>
<dbReference type="EC" id="2.8.1.10" evidence="1"/>
<dbReference type="EMBL" id="AE017355">
    <property type="protein sequence ID" value="AAT62485.1"/>
    <property type="molecule type" value="Genomic_DNA"/>
</dbReference>
<dbReference type="RefSeq" id="YP_034987.1">
    <property type="nucleotide sequence ID" value="NC_005957.1"/>
</dbReference>
<dbReference type="SMR" id="Q6HN84"/>
<dbReference type="KEGG" id="btk:BT9727_0642"/>
<dbReference type="PATRIC" id="fig|281309.8.peg.675"/>
<dbReference type="HOGENOM" id="CLU_062233_1_0_9"/>
<dbReference type="UniPathway" id="UPA00060"/>
<dbReference type="Proteomes" id="UP000001301">
    <property type="component" value="Chromosome"/>
</dbReference>
<dbReference type="GO" id="GO:0005737">
    <property type="term" value="C:cytoplasm"/>
    <property type="evidence" value="ECO:0007669"/>
    <property type="project" value="UniProtKB-SubCell"/>
</dbReference>
<dbReference type="GO" id="GO:1990107">
    <property type="term" value="F:thiazole synthase activity"/>
    <property type="evidence" value="ECO:0007669"/>
    <property type="project" value="UniProtKB-EC"/>
</dbReference>
<dbReference type="GO" id="GO:0009229">
    <property type="term" value="P:thiamine diphosphate biosynthetic process"/>
    <property type="evidence" value="ECO:0007669"/>
    <property type="project" value="UniProtKB-UniRule"/>
</dbReference>
<dbReference type="CDD" id="cd04728">
    <property type="entry name" value="ThiG"/>
    <property type="match status" value="1"/>
</dbReference>
<dbReference type="FunFam" id="3.20.20.70:FF:000049">
    <property type="entry name" value="Thiazole synthase"/>
    <property type="match status" value="1"/>
</dbReference>
<dbReference type="Gene3D" id="3.20.20.70">
    <property type="entry name" value="Aldolase class I"/>
    <property type="match status" value="1"/>
</dbReference>
<dbReference type="HAMAP" id="MF_00443">
    <property type="entry name" value="ThiG"/>
    <property type="match status" value="1"/>
</dbReference>
<dbReference type="InterPro" id="IPR013785">
    <property type="entry name" value="Aldolase_TIM"/>
</dbReference>
<dbReference type="InterPro" id="IPR033983">
    <property type="entry name" value="Thiazole_synthase_ThiG"/>
</dbReference>
<dbReference type="InterPro" id="IPR008867">
    <property type="entry name" value="ThiG"/>
</dbReference>
<dbReference type="PANTHER" id="PTHR34266">
    <property type="entry name" value="THIAZOLE SYNTHASE"/>
    <property type="match status" value="1"/>
</dbReference>
<dbReference type="PANTHER" id="PTHR34266:SF2">
    <property type="entry name" value="THIAZOLE SYNTHASE"/>
    <property type="match status" value="1"/>
</dbReference>
<dbReference type="Pfam" id="PF05690">
    <property type="entry name" value="ThiG"/>
    <property type="match status" value="1"/>
</dbReference>
<dbReference type="SUPFAM" id="SSF110399">
    <property type="entry name" value="ThiG-like"/>
    <property type="match status" value="1"/>
</dbReference>
<evidence type="ECO:0000255" key="1">
    <source>
        <dbReference type="HAMAP-Rule" id="MF_00443"/>
    </source>
</evidence>
<reference key="1">
    <citation type="journal article" date="2006" name="J. Bacteriol.">
        <title>Pathogenomic sequence analysis of Bacillus cereus and Bacillus thuringiensis isolates closely related to Bacillus anthracis.</title>
        <authorList>
            <person name="Han C.S."/>
            <person name="Xie G."/>
            <person name="Challacombe J.F."/>
            <person name="Altherr M.R."/>
            <person name="Bhotika S.S."/>
            <person name="Bruce D."/>
            <person name="Campbell C.S."/>
            <person name="Campbell M.L."/>
            <person name="Chen J."/>
            <person name="Chertkov O."/>
            <person name="Cleland C."/>
            <person name="Dimitrijevic M."/>
            <person name="Doggett N.A."/>
            <person name="Fawcett J.J."/>
            <person name="Glavina T."/>
            <person name="Goodwin L.A."/>
            <person name="Hill K.K."/>
            <person name="Hitchcock P."/>
            <person name="Jackson P.J."/>
            <person name="Keim P."/>
            <person name="Kewalramani A.R."/>
            <person name="Longmire J."/>
            <person name="Lucas S."/>
            <person name="Malfatti S."/>
            <person name="McMurry K."/>
            <person name="Meincke L.J."/>
            <person name="Misra M."/>
            <person name="Moseman B.L."/>
            <person name="Mundt M."/>
            <person name="Munk A.C."/>
            <person name="Okinaka R.T."/>
            <person name="Parson-Quintana B."/>
            <person name="Reilly L.P."/>
            <person name="Richardson P."/>
            <person name="Robinson D.L."/>
            <person name="Rubin E."/>
            <person name="Saunders E."/>
            <person name="Tapia R."/>
            <person name="Tesmer J.G."/>
            <person name="Thayer N."/>
            <person name="Thompson L.S."/>
            <person name="Tice H."/>
            <person name="Ticknor L.O."/>
            <person name="Wills P.L."/>
            <person name="Brettin T.S."/>
            <person name="Gilna P."/>
        </authorList>
    </citation>
    <scope>NUCLEOTIDE SEQUENCE [LARGE SCALE GENOMIC DNA]</scope>
    <source>
        <strain>97-27</strain>
    </source>
</reference>
<comment type="function">
    <text evidence="1">Catalyzes the rearrangement of 1-deoxy-D-xylulose 5-phosphate (DXP) to produce the thiazole phosphate moiety of thiamine. Sulfur is provided by the thiocarboxylate moiety of the carrier protein ThiS. In vitro, sulfur can be provided by H(2)S.</text>
</comment>
<comment type="catalytic activity">
    <reaction evidence="1">
        <text>[ThiS sulfur-carrier protein]-C-terminal-Gly-aminoethanethioate + 2-iminoacetate + 1-deoxy-D-xylulose 5-phosphate = [ThiS sulfur-carrier protein]-C-terminal Gly-Gly + 2-[(2R,5Z)-2-carboxy-4-methylthiazol-5(2H)-ylidene]ethyl phosphate + 2 H2O + H(+)</text>
        <dbReference type="Rhea" id="RHEA:26297"/>
        <dbReference type="Rhea" id="RHEA-COMP:12909"/>
        <dbReference type="Rhea" id="RHEA-COMP:19908"/>
        <dbReference type="ChEBI" id="CHEBI:15377"/>
        <dbReference type="ChEBI" id="CHEBI:15378"/>
        <dbReference type="ChEBI" id="CHEBI:57792"/>
        <dbReference type="ChEBI" id="CHEBI:62899"/>
        <dbReference type="ChEBI" id="CHEBI:77846"/>
        <dbReference type="ChEBI" id="CHEBI:90778"/>
        <dbReference type="ChEBI" id="CHEBI:232372"/>
        <dbReference type="EC" id="2.8.1.10"/>
    </reaction>
</comment>
<comment type="pathway">
    <text evidence="1">Cofactor biosynthesis; thiamine diphosphate biosynthesis.</text>
</comment>
<comment type="subunit">
    <text evidence="1">Homotetramer. Forms heterodimers with either ThiH or ThiS.</text>
</comment>
<comment type="subcellular location">
    <subcellularLocation>
        <location evidence="1">Cytoplasm</location>
    </subcellularLocation>
</comment>
<comment type="similarity">
    <text evidence="1">Belongs to the ThiG family.</text>
</comment>
<accession>Q6HN84</accession>
<protein>
    <recommendedName>
        <fullName evidence="1">Thiazole synthase</fullName>
        <ecNumber evidence="1">2.8.1.10</ecNumber>
    </recommendedName>
</protein>
<name>THIG_BACHK</name>
<gene>
    <name evidence="1" type="primary">thiG</name>
    <name type="ordered locus">BT9727_0642</name>
</gene>